<feature type="chain" id="PRO_1000053920" description="Uridylate kinase">
    <location>
        <begin position="1"/>
        <end position="240"/>
    </location>
</feature>
<feature type="region of interest" description="Involved in allosteric activation by GTP" evidence="1">
    <location>
        <begin position="20"/>
        <end position="25"/>
    </location>
</feature>
<feature type="binding site" evidence="1">
    <location>
        <begin position="12"/>
        <end position="15"/>
    </location>
    <ligand>
        <name>ATP</name>
        <dbReference type="ChEBI" id="CHEBI:30616"/>
    </ligand>
</feature>
<feature type="binding site" evidence="1">
    <location>
        <position position="54"/>
    </location>
    <ligand>
        <name>UMP</name>
        <dbReference type="ChEBI" id="CHEBI:57865"/>
    </ligand>
</feature>
<feature type="binding site" evidence="1">
    <location>
        <position position="55"/>
    </location>
    <ligand>
        <name>ATP</name>
        <dbReference type="ChEBI" id="CHEBI:30616"/>
    </ligand>
</feature>
<feature type="binding site" evidence="1">
    <location>
        <position position="59"/>
    </location>
    <ligand>
        <name>ATP</name>
        <dbReference type="ChEBI" id="CHEBI:30616"/>
    </ligand>
</feature>
<feature type="binding site" evidence="1">
    <location>
        <position position="74"/>
    </location>
    <ligand>
        <name>UMP</name>
        <dbReference type="ChEBI" id="CHEBI:57865"/>
    </ligand>
</feature>
<feature type="binding site" evidence="1">
    <location>
        <begin position="135"/>
        <end position="142"/>
    </location>
    <ligand>
        <name>UMP</name>
        <dbReference type="ChEBI" id="CHEBI:57865"/>
    </ligand>
</feature>
<feature type="binding site" evidence="1">
    <location>
        <position position="168"/>
    </location>
    <ligand>
        <name>ATP</name>
        <dbReference type="ChEBI" id="CHEBI:30616"/>
    </ligand>
</feature>
<feature type="binding site" evidence="1">
    <location>
        <position position="171"/>
    </location>
    <ligand>
        <name>ATP</name>
        <dbReference type="ChEBI" id="CHEBI:30616"/>
    </ligand>
</feature>
<organism>
    <name type="scientific">Desulfitobacterium hafniense (strain Y51)</name>
    <dbReference type="NCBI Taxonomy" id="138119"/>
    <lineage>
        <taxon>Bacteria</taxon>
        <taxon>Bacillati</taxon>
        <taxon>Bacillota</taxon>
        <taxon>Clostridia</taxon>
        <taxon>Eubacteriales</taxon>
        <taxon>Desulfitobacteriaceae</taxon>
        <taxon>Desulfitobacterium</taxon>
    </lineage>
</organism>
<comment type="function">
    <text evidence="1">Catalyzes the reversible phosphorylation of UMP to UDP.</text>
</comment>
<comment type="catalytic activity">
    <reaction evidence="1">
        <text>UMP + ATP = UDP + ADP</text>
        <dbReference type="Rhea" id="RHEA:24400"/>
        <dbReference type="ChEBI" id="CHEBI:30616"/>
        <dbReference type="ChEBI" id="CHEBI:57865"/>
        <dbReference type="ChEBI" id="CHEBI:58223"/>
        <dbReference type="ChEBI" id="CHEBI:456216"/>
        <dbReference type="EC" id="2.7.4.22"/>
    </reaction>
</comment>
<comment type="activity regulation">
    <text evidence="1">Allosterically activated by GTP. Inhibited by UTP.</text>
</comment>
<comment type="pathway">
    <text evidence="1">Pyrimidine metabolism; CTP biosynthesis via de novo pathway; UDP from UMP (UMPK route): step 1/1.</text>
</comment>
<comment type="subunit">
    <text evidence="1">Homohexamer.</text>
</comment>
<comment type="subcellular location">
    <subcellularLocation>
        <location evidence="1">Cytoplasm</location>
    </subcellularLocation>
</comment>
<comment type="similarity">
    <text evidence="1">Belongs to the UMP kinase family.</text>
</comment>
<accession>Q24UF9</accession>
<reference key="1">
    <citation type="journal article" date="2006" name="J. Bacteriol.">
        <title>Complete genome sequence of the dehalorespiring bacterium Desulfitobacterium hafniense Y51 and comparison with Dehalococcoides ethenogenes 195.</title>
        <authorList>
            <person name="Nonaka H."/>
            <person name="Keresztes G."/>
            <person name="Shinoda Y."/>
            <person name="Ikenaga Y."/>
            <person name="Abe M."/>
            <person name="Naito K."/>
            <person name="Inatomi K."/>
            <person name="Furukawa K."/>
            <person name="Inui M."/>
            <person name="Yukawa H."/>
        </authorList>
    </citation>
    <scope>NUCLEOTIDE SEQUENCE [LARGE SCALE GENOMIC DNA]</scope>
    <source>
        <strain>Y51</strain>
    </source>
</reference>
<keyword id="KW-0021">Allosteric enzyme</keyword>
<keyword id="KW-0067">ATP-binding</keyword>
<keyword id="KW-0963">Cytoplasm</keyword>
<keyword id="KW-0418">Kinase</keyword>
<keyword id="KW-0547">Nucleotide-binding</keyword>
<keyword id="KW-0665">Pyrimidine biosynthesis</keyword>
<keyword id="KW-1185">Reference proteome</keyword>
<keyword id="KW-0808">Transferase</keyword>
<dbReference type="EC" id="2.7.4.22" evidence="1"/>
<dbReference type="EMBL" id="AP008230">
    <property type="protein sequence ID" value="BAE84333.1"/>
    <property type="molecule type" value="Genomic_DNA"/>
</dbReference>
<dbReference type="RefSeq" id="WP_005810668.1">
    <property type="nucleotide sequence ID" value="NC_007907.1"/>
</dbReference>
<dbReference type="SMR" id="Q24UF9"/>
<dbReference type="STRING" id="138119.DSY2544"/>
<dbReference type="KEGG" id="dsy:DSY2544"/>
<dbReference type="eggNOG" id="COG0528">
    <property type="taxonomic scope" value="Bacteria"/>
</dbReference>
<dbReference type="HOGENOM" id="CLU_033861_0_0_9"/>
<dbReference type="UniPathway" id="UPA00159">
    <property type="reaction ID" value="UER00275"/>
</dbReference>
<dbReference type="Proteomes" id="UP000001946">
    <property type="component" value="Chromosome"/>
</dbReference>
<dbReference type="GO" id="GO:0005737">
    <property type="term" value="C:cytoplasm"/>
    <property type="evidence" value="ECO:0007669"/>
    <property type="project" value="UniProtKB-SubCell"/>
</dbReference>
<dbReference type="GO" id="GO:0005524">
    <property type="term" value="F:ATP binding"/>
    <property type="evidence" value="ECO:0007669"/>
    <property type="project" value="UniProtKB-KW"/>
</dbReference>
<dbReference type="GO" id="GO:0033862">
    <property type="term" value="F:UMP kinase activity"/>
    <property type="evidence" value="ECO:0007669"/>
    <property type="project" value="UniProtKB-EC"/>
</dbReference>
<dbReference type="GO" id="GO:0044210">
    <property type="term" value="P:'de novo' CTP biosynthetic process"/>
    <property type="evidence" value="ECO:0007669"/>
    <property type="project" value="UniProtKB-UniRule"/>
</dbReference>
<dbReference type="GO" id="GO:0006225">
    <property type="term" value="P:UDP biosynthetic process"/>
    <property type="evidence" value="ECO:0007669"/>
    <property type="project" value="TreeGrafter"/>
</dbReference>
<dbReference type="CDD" id="cd04254">
    <property type="entry name" value="AAK_UMPK-PyrH-Ec"/>
    <property type="match status" value="1"/>
</dbReference>
<dbReference type="FunFam" id="3.40.1160.10:FF:000001">
    <property type="entry name" value="Uridylate kinase"/>
    <property type="match status" value="1"/>
</dbReference>
<dbReference type="Gene3D" id="3.40.1160.10">
    <property type="entry name" value="Acetylglutamate kinase-like"/>
    <property type="match status" value="1"/>
</dbReference>
<dbReference type="HAMAP" id="MF_01220_B">
    <property type="entry name" value="PyrH_B"/>
    <property type="match status" value="1"/>
</dbReference>
<dbReference type="InterPro" id="IPR036393">
    <property type="entry name" value="AceGlu_kinase-like_sf"/>
</dbReference>
<dbReference type="InterPro" id="IPR001048">
    <property type="entry name" value="Asp/Glu/Uridylate_kinase"/>
</dbReference>
<dbReference type="InterPro" id="IPR011817">
    <property type="entry name" value="Uridylate_kinase"/>
</dbReference>
<dbReference type="InterPro" id="IPR015963">
    <property type="entry name" value="Uridylate_kinase_bac"/>
</dbReference>
<dbReference type="NCBIfam" id="TIGR02075">
    <property type="entry name" value="pyrH_bact"/>
    <property type="match status" value="1"/>
</dbReference>
<dbReference type="PANTHER" id="PTHR42833">
    <property type="entry name" value="URIDYLATE KINASE"/>
    <property type="match status" value="1"/>
</dbReference>
<dbReference type="PANTHER" id="PTHR42833:SF4">
    <property type="entry name" value="URIDYLATE KINASE PUMPKIN, CHLOROPLASTIC"/>
    <property type="match status" value="1"/>
</dbReference>
<dbReference type="Pfam" id="PF00696">
    <property type="entry name" value="AA_kinase"/>
    <property type="match status" value="1"/>
</dbReference>
<dbReference type="PIRSF" id="PIRSF005650">
    <property type="entry name" value="Uridylate_kin"/>
    <property type="match status" value="1"/>
</dbReference>
<dbReference type="SUPFAM" id="SSF53633">
    <property type="entry name" value="Carbamate kinase-like"/>
    <property type="match status" value="1"/>
</dbReference>
<gene>
    <name evidence="1" type="primary">pyrH</name>
    <name type="ordered locus">DSY2544</name>
</gene>
<sequence length="240" mass="25949">METPRYRRVILKLSGEALAGSQGFGIAHEMLVTVAEQVVEIQKLGVEVALVVGGGNIWRGIAGSKQGMDRANADYMGMLATVMNALALQDAMEKAGAATRVLSAIEMRQVAEPYIRRRAIRHLEKGRVVIFAAGTGNPYFSTDTTAALRAAEIEAEAILMAKRVDGVYDSDPLKNPEAKKYDRLTFLDVLSQGLGVMDSTAASLCMDNNIPLIVFDLNKKGNIRKGIMGESIGTYVGRDK</sequence>
<name>PYRH_DESHY</name>
<proteinExistence type="inferred from homology"/>
<evidence type="ECO:0000255" key="1">
    <source>
        <dbReference type="HAMAP-Rule" id="MF_01220"/>
    </source>
</evidence>
<protein>
    <recommendedName>
        <fullName evidence="1">Uridylate kinase</fullName>
        <shortName evidence="1">UK</shortName>
        <ecNumber evidence="1">2.7.4.22</ecNumber>
    </recommendedName>
    <alternativeName>
        <fullName evidence="1">Uridine monophosphate kinase</fullName>
        <shortName evidence="1">UMP kinase</shortName>
        <shortName evidence="1">UMPK</shortName>
    </alternativeName>
</protein>